<keyword id="KW-0963">Cytoplasm</keyword>
<keyword id="KW-0396">Initiation factor</keyword>
<keyword id="KW-0648">Protein biosynthesis</keyword>
<keyword id="KW-1185">Reference proteome</keyword>
<accession>B4LEJ0</accession>
<name>EIF3L_DROVI</name>
<reference key="1">
    <citation type="journal article" date="2007" name="Nature">
        <title>Evolution of genes and genomes on the Drosophila phylogeny.</title>
        <authorList>
            <consortium name="Drosophila 12 genomes consortium"/>
        </authorList>
    </citation>
    <scope>NUCLEOTIDE SEQUENCE [LARGE SCALE GENOMIC DNA]</scope>
    <source>
        <strain>Tucson 15010-1051.87</strain>
    </source>
</reference>
<evidence type="ECO:0000255" key="1">
    <source>
        <dbReference type="HAMAP-Rule" id="MF_03011"/>
    </source>
</evidence>
<evidence type="ECO:0000255" key="2">
    <source>
        <dbReference type="PROSITE-ProRule" id="PRU01185"/>
    </source>
</evidence>
<comment type="function">
    <text evidence="1">Component of the eukaryotic translation initiation factor 3 (eIF-3) complex, which is involved in protein synthesis of a specialized repertoire of mRNAs and, together with other initiation factors, stimulates binding of mRNA and methionyl-tRNAi to the 40S ribosome. The eIF-3 complex specifically targets and initiates translation of a subset of mRNAs involved in cell proliferation.</text>
</comment>
<comment type="subunit">
    <text evidence="1">Component of the eukaryotic translation initiation factor 3 (eIF-3) complex. The eIF-3 complex interacts with pix.</text>
</comment>
<comment type="subcellular location">
    <subcellularLocation>
        <location evidence="1">Cytoplasm</location>
    </subcellularLocation>
</comment>
<comment type="similarity">
    <text evidence="1">Belongs to the eIF-3 subunit L family.</text>
</comment>
<organism>
    <name type="scientific">Drosophila virilis</name>
    <name type="common">Fruit fly</name>
    <dbReference type="NCBI Taxonomy" id="7244"/>
    <lineage>
        <taxon>Eukaryota</taxon>
        <taxon>Metazoa</taxon>
        <taxon>Ecdysozoa</taxon>
        <taxon>Arthropoda</taxon>
        <taxon>Hexapoda</taxon>
        <taxon>Insecta</taxon>
        <taxon>Pterygota</taxon>
        <taxon>Neoptera</taxon>
        <taxon>Endopterygota</taxon>
        <taxon>Diptera</taxon>
        <taxon>Brachycera</taxon>
        <taxon>Muscomorpha</taxon>
        <taxon>Ephydroidea</taxon>
        <taxon>Drosophilidae</taxon>
        <taxon>Drosophila</taxon>
    </lineage>
</organism>
<sequence>MYGGEEFGNSDFYDDYAHTGDPALDLEYERNFYANRMPENVKYFLMNFCQAIKEGNLYDIQNMYENTFPQISDHHFDKTAWPDEQEVGAIVDNDKVFLILYKELYYRHIHARIPGGPKLEQRINSFFNYCDFFNLIISAQNPVMLELPDIWLWELVDEFVYQFQNFAQYRARLTDKSQDEIQQLCVNHSNVWSILCILNVLHSLVDISNIKKQLEAISQGIDPQTVAGDFGKLAFYKMLGYFSLVGLLRVHSLLGDYYQAIKVLEPIEIHKKSAYSHIPACQISTSYYVGFAYMMMRRYADAIRTFSDILLYIQRTKQLYSTRSYQNDQINKQAEQMYHLLAICLVLHPQCIDESIQQVLREKNYHDAMFKMQCGDLEVFKSFFVFACPRFVSPCPPAADAPMEDYVKDPMEHQLLVFMDEVRQQKDLPTTRSYLKLYTTLPLTKLASFIDPNASEDDVSKLLIRLLCFKHKMRNLVWSKGPSGLEGTFKSGSELDFYIDDDMIHIADTKVSHRYGDFFVRKIMKFNDLNRKLKNINI</sequence>
<feature type="chain" id="PRO_0000364251" description="Eukaryotic translation initiation factor 3 subunit L">
    <location>
        <begin position="1"/>
        <end position="538"/>
    </location>
</feature>
<feature type="domain" description="PCI" evidence="2">
    <location>
        <begin position="305"/>
        <end position="513"/>
    </location>
</feature>
<protein>
    <recommendedName>
        <fullName evidence="1">Eukaryotic translation initiation factor 3 subunit L</fullName>
        <shortName evidence="1">eIF3l</shortName>
    </recommendedName>
</protein>
<dbReference type="EMBL" id="CH940647">
    <property type="protein sequence ID" value="EDW69075.1"/>
    <property type="molecule type" value="Genomic_DNA"/>
</dbReference>
<dbReference type="SMR" id="B4LEJ0"/>
<dbReference type="FunCoup" id="B4LEJ0">
    <property type="interactions" value="1960"/>
</dbReference>
<dbReference type="STRING" id="7244.B4LEJ0"/>
<dbReference type="EnsemblMetazoa" id="FBtr0228968">
    <property type="protein sequence ID" value="FBpp0227460"/>
    <property type="gene ID" value="FBgn0200277"/>
</dbReference>
<dbReference type="EnsemblMetazoa" id="XM_002046697.2">
    <property type="protein sequence ID" value="XP_002046733.1"/>
    <property type="gene ID" value="LOC6623216"/>
</dbReference>
<dbReference type="GeneID" id="6623216"/>
<dbReference type="KEGG" id="dvi:6623216"/>
<dbReference type="CTD" id="51386"/>
<dbReference type="eggNOG" id="KOG3677">
    <property type="taxonomic scope" value="Eukaryota"/>
</dbReference>
<dbReference type="HOGENOM" id="CLU_029210_0_1_1"/>
<dbReference type="InParanoid" id="B4LEJ0"/>
<dbReference type="OMA" id="AGWFIRN"/>
<dbReference type="OrthoDB" id="15082at2759"/>
<dbReference type="PhylomeDB" id="B4LEJ0"/>
<dbReference type="Proteomes" id="UP000008792">
    <property type="component" value="Unassembled WGS sequence"/>
</dbReference>
<dbReference type="GO" id="GO:0016282">
    <property type="term" value="C:eukaryotic 43S preinitiation complex"/>
    <property type="evidence" value="ECO:0007669"/>
    <property type="project" value="UniProtKB-UniRule"/>
</dbReference>
<dbReference type="GO" id="GO:0033290">
    <property type="term" value="C:eukaryotic 48S preinitiation complex"/>
    <property type="evidence" value="ECO:0007669"/>
    <property type="project" value="UniProtKB-UniRule"/>
</dbReference>
<dbReference type="GO" id="GO:0005852">
    <property type="term" value="C:eukaryotic translation initiation factor 3 complex"/>
    <property type="evidence" value="ECO:0007669"/>
    <property type="project" value="UniProtKB-UniRule"/>
</dbReference>
<dbReference type="GO" id="GO:0003743">
    <property type="term" value="F:translation initiation factor activity"/>
    <property type="evidence" value="ECO:0007669"/>
    <property type="project" value="UniProtKB-UniRule"/>
</dbReference>
<dbReference type="GO" id="GO:0001732">
    <property type="term" value="P:formation of cytoplasmic translation initiation complex"/>
    <property type="evidence" value="ECO:0007669"/>
    <property type="project" value="UniProtKB-UniRule"/>
</dbReference>
<dbReference type="HAMAP" id="MF_03011">
    <property type="entry name" value="eIF3l"/>
    <property type="match status" value="1"/>
</dbReference>
<dbReference type="InterPro" id="IPR019382">
    <property type="entry name" value="eIF3l"/>
</dbReference>
<dbReference type="InterPro" id="IPR000717">
    <property type="entry name" value="PCI_dom"/>
</dbReference>
<dbReference type="InterPro" id="IPR011990">
    <property type="entry name" value="TPR-like_helical_dom_sf"/>
</dbReference>
<dbReference type="PANTHER" id="PTHR13242">
    <property type="entry name" value="EUKARYOTIC TRANSLATION INITIATION FACTOR 3"/>
    <property type="match status" value="1"/>
</dbReference>
<dbReference type="PANTHER" id="PTHR13242:SF0">
    <property type="entry name" value="EUKARYOTIC TRANSLATION INITIATION FACTOR 3 SUBUNIT L"/>
    <property type="match status" value="1"/>
</dbReference>
<dbReference type="Pfam" id="PF10255">
    <property type="entry name" value="Paf67"/>
    <property type="match status" value="1"/>
</dbReference>
<dbReference type="SUPFAM" id="SSF48452">
    <property type="entry name" value="TPR-like"/>
    <property type="match status" value="1"/>
</dbReference>
<dbReference type="PROSITE" id="PS50250">
    <property type="entry name" value="PCI"/>
    <property type="match status" value="1"/>
</dbReference>
<proteinExistence type="inferred from homology"/>
<gene>
    <name type="ORF">GJ13043</name>
</gene>